<reference key="1">
    <citation type="journal article" date="2009" name="J. Bacteriol.">
        <title>The genome of Burkholderia cenocepacia J2315, an epidemic pathogen of cystic fibrosis patients.</title>
        <authorList>
            <person name="Holden M.T."/>
            <person name="Seth-Smith H.M."/>
            <person name="Crossman L.C."/>
            <person name="Sebaihia M."/>
            <person name="Bentley S.D."/>
            <person name="Cerdeno-Tarraga A.M."/>
            <person name="Thomson N.R."/>
            <person name="Bason N."/>
            <person name="Quail M.A."/>
            <person name="Sharp S."/>
            <person name="Cherevach I."/>
            <person name="Churcher C."/>
            <person name="Goodhead I."/>
            <person name="Hauser H."/>
            <person name="Holroyd N."/>
            <person name="Mungall K."/>
            <person name="Scott P."/>
            <person name="Walker D."/>
            <person name="White B."/>
            <person name="Rose H."/>
            <person name="Iversen P."/>
            <person name="Mil-Homens D."/>
            <person name="Rocha E.P."/>
            <person name="Fialho A.M."/>
            <person name="Baldwin A."/>
            <person name="Dowson C."/>
            <person name="Barrell B.G."/>
            <person name="Govan J.R."/>
            <person name="Vandamme P."/>
            <person name="Hart C.A."/>
            <person name="Mahenthiralingam E."/>
            <person name="Parkhill J."/>
        </authorList>
    </citation>
    <scope>NUCLEOTIDE SEQUENCE [LARGE SCALE GENOMIC DNA]</scope>
    <source>
        <strain>ATCC BAA-245 / DSM 16553 / LMG 16656 / NCTC 13227 / J2315 / CF5610</strain>
    </source>
</reference>
<gene>
    <name evidence="1" type="primary">lspA</name>
    <name type="ordered locus">BceJ2315_26640</name>
    <name type="ORF">BCAL2725</name>
</gene>
<protein>
    <recommendedName>
        <fullName evidence="1">Lipoprotein signal peptidase</fullName>
        <ecNumber evidence="1">3.4.23.36</ecNumber>
    </recommendedName>
    <alternativeName>
        <fullName evidence="1">Prolipoprotein signal peptidase</fullName>
    </alternativeName>
    <alternativeName>
        <fullName evidence="1">Signal peptidase II</fullName>
        <shortName evidence="1">SPase II</shortName>
    </alternativeName>
</protein>
<feature type="chain" id="PRO_1000097237" description="Lipoprotein signal peptidase">
    <location>
        <begin position="1"/>
        <end position="166"/>
    </location>
</feature>
<feature type="transmembrane region" description="Helical" evidence="1">
    <location>
        <begin position="9"/>
        <end position="29"/>
    </location>
</feature>
<feature type="transmembrane region" description="Helical" evidence="1">
    <location>
        <begin position="45"/>
        <end position="65"/>
    </location>
</feature>
<feature type="transmembrane region" description="Helical" evidence="1">
    <location>
        <begin position="71"/>
        <end position="91"/>
    </location>
</feature>
<feature type="transmembrane region" description="Helical" evidence="1">
    <location>
        <begin position="100"/>
        <end position="120"/>
    </location>
</feature>
<feature type="transmembrane region" description="Helical" evidence="1">
    <location>
        <begin position="135"/>
        <end position="155"/>
    </location>
</feature>
<feature type="active site" evidence="1">
    <location>
        <position position="126"/>
    </location>
</feature>
<feature type="active site" evidence="1">
    <location>
        <position position="144"/>
    </location>
</feature>
<organism>
    <name type="scientific">Burkholderia cenocepacia (strain ATCC BAA-245 / DSM 16553 / LMG 16656 / NCTC 13227 / J2315 / CF5610)</name>
    <name type="common">Burkholderia cepacia (strain J2315)</name>
    <dbReference type="NCBI Taxonomy" id="216591"/>
    <lineage>
        <taxon>Bacteria</taxon>
        <taxon>Pseudomonadati</taxon>
        <taxon>Pseudomonadota</taxon>
        <taxon>Betaproteobacteria</taxon>
        <taxon>Burkholderiales</taxon>
        <taxon>Burkholderiaceae</taxon>
        <taxon>Burkholderia</taxon>
        <taxon>Burkholderia cepacia complex</taxon>
    </lineage>
</organism>
<name>LSPA_BURCJ</name>
<keyword id="KW-0064">Aspartyl protease</keyword>
<keyword id="KW-0997">Cell inner membrane</keyword>
<keyword id="KW-1003">Cell membrane</keyword>
<keyword id="KW-0378">Hydrolase</keyword>
<keyword id="KW-0472">Membrane</keyword>
<keyword id="KW-0645">Protease</keyword>
<keyword id="KW-0812">Transmembrane</keyword>
<keyword id="KW-1133">Transmembrane helix</keyword>
<dbReference type="EC" id="3.4.23.36" evidence="1"/>
<dbReference type="EMBL" id="AM747720">
    <property type="protein sequence ID" value="CAR53026.1"/>
    <property type="molecule type" value="Genomic_DNA"/>
</dbReference>
<dbReference type="RefSeq" id="WP_006488949.1">
    <property type="nucleotide sequence ID" value="NC_011000.1"/>
</dbReference>
<dbReference type="SMR" id="B4E8Z8"/>
<dbReference type="GeneID" id="56559101"/>
<dbReference type="KEGG" id="bcj:BCAL2725"/>
<dbReference type="eggNOG" id="COG0597">
    <property type="taxonomic scope" value="Bacteria"/>
</dbReference>
<dbReference type="HOGENOM" id="CLU_083252_4_0_4"/>
<dbReference type="BioCyc" id="BCEN216591:G1G1V-3018-MONOMER"/>
<dbReference type="UniPathway" id="UPA00665"/>
<dbReference type="Proteomes" id="UP000001035">
    <property type="component" value="Chromosome 1"/>
</dbReference>
<dbReference type="GO" id="GO:0005886">
    <property type="term" value="C:plasma membrane"/>
    <property type="evidence" value="ECO:0007669"/>
    <property type="project" value="UniProtKB-SubCell"/>
</dbReference>
<dbReference type="GO" id="GO:0004190">
    <property type="term" value="F:aspartic-type endopeptidase activity"/>
    <property type="evidence" value="ECO:0007669"/>
    <property type="project" value="UniProtKB-UniRule"/>
</dbReference>
<dbReference type="GO" id="GO:0006508">
    <property type="term" value="P:proteolysis"/>
    <property type="evidence" value="ECO:0007669"/>
    <property type="project" value="UniProtKB-KW"/>
</dbReference>
<dbReference type="HAMAP" id="MF_00161">
    <property type="entry name" value="LspA"/>
    <property type="match status" value="1"/>
</dbReference>
<dbReference type="InterPro" id="IPR001872">
    <property type="entry name" value="Peptidase_A8"/>
</dbReference>
<dbReference type="NCBIfam" id="TIGR00077">
    <property type="entry name" value="lspA"/>
    <property type="match status" value="1"/>
</dbReference>
<dbReference type="PANTHER" id="PTHR33695">
    <property type="entry name" value="LIPOPROTEIN SIGNAL PEPTIDASE"/>
    <property type="match status" value="1"/>
</dbReference>
<dbReference type="PANTHER" id="PTHR33695:SF1">
    <property type="entry name" value="LIPOPROTEIN SIGNAL PEPTIDASE"/>
    <property type="match status" value="1"/>
</dbReference>
<dbReference type="Pfam" id="PF01252">
    <property type="entry name" value="Peptidase_A8"/>
    <property type="match status" value="1"/>
</dbReference>
<dbReference type="PRINTS" id="PR00781">
    <property type="entry name" value="LIPOSIGPTASE"/>
</dbReference>
<dbReference type="PROSITE" id="PS00855">
    <property type="entry name" value="SPASE_II"/>
    <property type="match status" value="1"/>
</dbReference>
<evidence type="ECO:0000255" key="1">
    <source>
        <dbReference type="HAMAP-Rule" id="MF_00161"/>
    </source>
</evidence>
<accession>B4E8Z8</accession>
<sequence>MAKTLSKPASGALAPWLGISLIVILFDQLSKIAILKTFAYGAQHALTSFFNLVLVYNRGAAFGFLSTASGWQRWAFTALGVGATLVICFLLKRHGHQRLFSVSLALILGGALGNVIDRLVYGHVIDFLDFHLGAWHFPAFNLADSAITIGAVLLIYDELRRVRGSR</sequence>
<proteinExistence type="inferred from homology"/>
<comment type="function">
    <text evidence="1">This protein specifically catalyzes the removal of signal peptides from prolipoproteins.</text>
</comment>
<comment type="catalytic activity">
    <reaction evidence="1">
        <text>Release of signal peptides from bacterial membrane prolipoproteins. Hydrolyzes -Xaa-Yaa-Zaa-|-(S,diacylglyceryl)Cys-, in which Xaa is hydrophobic (preferably Leu), and Yaa (Ala or Ser) and Zaa (Gly or Ala) have small, neutral side chains.</text>
        <dbReference type="EC" id="3.4.23.36"/>
    </reaction>
</comment>
<comment type="pathway">
    <text evidence="1">Protein modification; lipoprotein biosynthesis (signal peptide cleavage).</text>
</comment>
<comment type="subcellular location">
    <subcellularLocation>
        <location evidence="1">Cell inner membrane</location>
        <topology evidence="1">Multi-pass membrane protein</topology>
    </subcellularLocation>
</comment>
<comment type="similarity">
    <text evidence="1">Belongs to the peptidase A8 family.</text>
</comment>